<sequence>MNEMLTLVGQLRSDFGTSSARALRRQGKVPGVIYKKGITPIHVCTLEKEVAKLYRKPFFSSTVIQLQVDDQRFKVLPKAVQLHPVTEFINHIDFILVEQNGGIQKVKVPISFEGKDKSLGIKRGGYLNIVKRYVDLLCPVDKIPQCIKCDIANVPVGASIKVSRLELPEGCNLVKRTTDYVIASVIGKSSKQDKEEEGTAEDGADSK</sequence>
<comment type="function">
    <text evidence="1">This is one of the proteins that binds to the 5S RNA in the ribosome where it forms part of the central protuberance.</text>
</comment>
<comment type="subunit">
    <text evidence="1">Part of the 50S ribosomal subunit; part of the 5S rRNA/L5/L18/L25 subcomplex. Contacts the 5S rRNA. Binds to the 5S rRNA independently of L5 and L18.</text>
</comment>
<comment type="similarity">
    <text evidence="1">Belongs to the bacterial ribosomal protein bL25 family. CTC subfamily.</text>
</comment>
<name>RL25_ORITI</name>
<reference key="1">
    <citation type="journal article" date="2008" name="DNA Res.">
        <title>The whole-genome sequencing of the obligate intracellular bacterium Orientia tsutsugamushi revealed massive gene amplification during reductive genome evolution.</title>
        <authorList>
            <person name="Nakayama K."/>
            <person name="Yamashita A."/>
            <person name="Kurokawa K."/>
            <person name="Morimoto T."/>
            <person name="Ogawa M."/>
            <person name="Fukuhara M."/>
            <person name="Urakami H."/>
            <person name="Ohnishi M."/>
            <person name="Uchiyama I."/>
            <person name="Ogura Y."/>
            <person name="Ooka T."/>
            <person name="Oshima K."/>
            <person name="Tamura A."/>
            <person name="Hattori M."/>
            <person name="Hayashi T."/>
        </authorList>
    </citation>
    <scope>NUCLEOTIDE SEQUENCE [LARGE SCALE GENOMIC DNA]</scope>
    <source>
        <strain>Ikeda</strain>
    </source>
</reference>
<keyword id="KW-0687">Ribonucleoprotein</keyword>
<keyword id="KW-0689">Ribosomal protein</keyword>
<keyword id="KW-0694">RNA-binding</keyword>
<keyword id="KW-0699">rRNA-binding</keyword>
<dbReference type="EMBL" id="AP008981">
    <property type="protein sequence ID" value="BAG40656.1"/>
    <property type="molecule type" value="Genomic_DNA"/>
</dbReference>
<dbReference type="RefSeq" id="WP_012461724.1">
    <property type="nucleotide sequence ID" value="NC_010793.1"/>
</dbReference>
<dbReference type="SMR" id="B3CTF9"/>
<dbReference type="KEGG" id="ott:OTT_1198"/>
<dbReference type="HOGENOM" id="CLU_075939_0_0_5"/>
<dbReference type="OrthoDB" id="9806411at2"/>
<dbReference type="Proteomes" id="UP000001033">
    <property type="component" value="Chromosome"/>
</dbReference>
<dbReference type="GO" id="GO:0022625">
    <property type="term" value="C:cytosolic large ribosomal subunit"/>
    <property type="evidence" value="ECO:0007669"/>
    <property type="project" value="TreeGrafter"/>
</dbReference>
<dbReference type="GO" id="GO:0008097">
    <property type="term" value="F:5S rRNA binding"/>
    <property type="evidence" value="ECO:0007669"/>
    <property type="project" value="InterPro"/>
</dbReference>
<dbReference type="GO" id="GO:0003735">
    <property type="term" value="F:structural constituent of ribosome"/>
    <property type="evidence" value="ECO:0007669"/>
    <property type="project" value="InterPro"/>
</dbReference>
<dbReference type="GO" id="GO:0006412">
    <property type="term" value="P:translation"/>
    <property type="evidence" value="ECO:0007669"/>
    <property type="project" value="UniProtKB-UniRule"/>
</dbReference>
<dbReference type="CDD" id="cd00495">
    <property type="entry name" value="Ribosomal_L25_TL5_CTC"/>
    <property type="match status" value="1"/>
</dbReference>
<dbReference type="Gene3D" id="2.170.120.20">
    <property type="entry name" value="Ribosomal protein L25, beta domain"/>
    <property type="match status" value="1"/>
</dbReference>
<dbReference type="Gene3D" id="2.40.240.10">
    <property type="entry name" value="Ribosomal Protein L25, Chain P"/>
    <property type="match status" value="1"/>
</dbReference>
<dbReference type="HAMAP" id="MF_01334">
    <property type="entry name" value="Ribosomal_bL25_CTC"/>
    <property type="match status" value="1"/>
</dbReference>
<dbReference type="InterPro" id="IPR020056">
    <property type="entry name" value="Rbsml_bL25/Gln-tRNA_synth_N"/>
</dbReference>
<dbReference type="InterPro" id="IPR011035">
    <property type="entry name" value="Ribosomal_bL25/Gln-tRNA_synth"/>
</dbReference>
<dbReference type="InterPro" id="IPR020057">
    <property type="entry name" value="Ribosomal_bL25_b-dom"/>
</dbReference>
<dbReference type="InterPro" id="IPR037121">
    <property type="entry name" value="Ribosomal_bL25_C"/>
</dbReference>
<dbReference type="InterPro" id="IPR001021">
    <property type="entry name" value="Ribosomal_bL25_long"/>
</dbReference>
<dbReference type="InterPro" id="IPR029751">
    <property type="entry name" value="Ribosomal_L25_dom"/>
</dbReference>
<dbReference type="InterPro" id="IPR020930">
    <property type="entry name" value="Ribosomal_uL5_bac-type"/>
</dbReference>
<dbReference type="NCBIfam" id="TIGR00731">
    <property type="entry name" value="bL25_bact_ctc"/>
    <property type="match status" value="1"/>
</dbReference>
<dbReference type="NCBIfam" id="NF004128">
    <property type="entry name" value="PRK05618.1-2"/>
    <property type="match status" value="1"/>
</dbReference>
<dbReference type="NCBIfam" id="NF004612">
    <property type="entry name" value="PRK05943.1"/>
    <property type="match status" value="1"/>
</dbReference>
<dbReference type="PANTHER" id="PTHR33284">
    <property type="entry name" value="RIBOSOMAL PROTEIN L25/GLN-TRNA SYNTHETASE, ANTI-CODON-BINDING DOMAIN-CONTAINING PROTEIN"/>
    <property type="match status" value="1"/>
</dbReference>
<dbReference type="PANTHER" id="PTHR33284:SF1">
    <property type="entry name" value="RIBOSOMAL PROTEIN L25_GLN-TRNA SYNTHETASE, ANTI-CODON-BINDING DOMAIN-CONTAINING PROTEIN"/>
    <property type="match status" value="1"/>
</dbReference>
<dbReference type="Pfam" id="PF01386">
    <property type="entry name" value="Ribosomal_L25p"/>
    <property type="match status" value="1"/>
</dbReference>
<dbReference type="Pfam" id="PF14693">
    <property type="entry name" value="Ribosomal_TL5_C"/>
    <property type="match status" value="1"/>
</dbReference>
<dbReference type="SUPFAM" id="SSF50715">
    <property type="entry name" value="Ribosomal protein L25-like"/>
    <property type="match status" value="1"/>
</dbReference>
<gene>
    <name evidence="1" type="primary">rplY</name>
    <name evidence="1" type="synonym">ctc</name>
    <name type="ordered locus">OTT_1198</name>
</gene>
<accession>B3CTF9</accession>
<evidence type="ECO:0000255" key="1">
    <source>
        <dbReference type="HAMAP-Rule" id="MF_01334"/>
    </source>
</evidence>
<evidence type="ECO:0000305" key="2"/>
<feature type="chain" id="PRO_1000142540" description="Large ribosomal subunit protein bL25">
    <location>
        <begin position="1"/>
        <end position="207"/>
    </location>
</feature>
<proteinExistence type="inferred from homology"/>
<protein>
    <recommendedName>
        <fullName evidence="1">Large ribosomal subunit protein bL25</fullName>
    </recommendedName>
    <alternativeName>
        <fullName evidence="2">50S ribosomal protein L25</fullName>
    </alternativeName>
    <alternativeName>
        <fullName evidence="1">General stress protein CTC</fullName>
    </alternativeName>
</protein>
<organism>
    <name type="scientific">Orientia tsutsugamushi (strain Ikeda)</name>
    <name type="common">Rickettsia tsutsugamushi</name>
    <dbReference type="NCBI Taxonomy" id="334380"/>
    <lineage>
        <taxon>Bacteria</taxon>
        <taxon>Pseudomonadati</taxon>
        <taxon>Pseudomonadota</taxon>
        <taxon>Alphaproteobacteria</taxon>
        <taxon>Rickettsiales</taxon>
        <taxon>Rickettsiaceae</taxon>
        <taxon>Rickettsieae</taxon>
        <taxon>Orientia</taxon>
    </lineage>
</organism>